<name>SPDB_STRLI</name>
<geneLocation type="plasmid">
    <name>pIJ101</name>
</geneLocation>
<accession>P22408</accession>
<protein>
    <recommendedName>
        <fullName>Protein SpdB</fullName>
    </recommendedName>
</protein>
<proteinExistence type="predicted"/>
<gene>
    <name type="primary">spdB</name>
</gene>
<feature type="chain" id="PRO_0000072115" description="Protein SpdB">
    <location>
        <begin position="1"/>
        <end position="291"/>
    </location>
</feature>
<feature type="transmembrane region" description="Helical" evidence="1">
    <location>
        <begin position="24"/>
        <end position="44"/>
    </location>
</feature>
<feature type="transmembrane region" description="Helical" evidence="1">
    <location>
        <begin position="71"/>
        <end position="91"/>
    </location>
</feature>
<feature type="transmembrane region" description="Helical" evidence="1">
    <location>
        <begin position="99"/>
        <end position="119"/>
    </location>
</feature>
<dbReference type="EMBL" id="M21778">
    <property type="protein sequence ID" value="AAA88408.1"/>
    <property type="molecule type" value="Genomic_DNA"/>
</dbReference>
<dbReference type="PIR" id="E31844">
    <property type="entry name" value="E31844"/>
</dbReference>
<dbReference type="RefSeq" id="NP_040445.1">
    <property type="nucleotide sequence ID" value="NC_001387.1"/>
</dbReference>
<dbReference type="RefSeq" id="WP_010889917.1">
    <property type="nucleotide sequence ID" value="NC_001387.1"/>
</dbReference>
<dbReference type="SMR" id="P22408"/>
<dbReference type="GO" id="GO:0005886">
    <property type="term" value="C:plasma membrane"/>
    <property type="evidence" value="ECO:0007669"/>
    <property type="project" value="UniProtKB-SubCell"/>
</dbReference>
<keyword id="KW-1003">Cell membrane</keyword>
<keyword id="KW-0472">Membrane</keyword>
<keyword id="KW-0614">Plasmid</keyword>
<keyword id="KW-0812">Transmembrane</keyword>
<keyword id="KW-1133">Transmembrane helix</keyword>
<comment type="function">
    <text>Involved in plasmid transfer.</text>
</comment>
<comment type="subcellular location">
    <subcellularLocation>
        <location evidence="2">Cell membrane</location>
        <topology evidence="2">Multi-pass membrane protein</topology>
    </subcellularLocation>
</comment>
<reference key="1">
    <citation type="journal article" date="1988" name="J. Bacteriol.">
        <title>Complete nucleotide sequence of the Streptomyces lividans plasmid pIJ101 and correlation of the sequence with genetic properties.</title>
        <authorList>
            <person name="Kendall K.J."/>
            <person name="Cohen S.N."/>
        </authorList>
    </citation>
    <scope>NUCLEOTIDE SEQUENCE [GENOMIC DNA]</scope>
</reference>
<evidence type="ECO:0000255" key="1"/>
<evidence type="ECO:0000305" key="2"/>
<organism>
    <name type="scientific">Streptomyces lividans</name>
    <dbReference type="NCBI Taxonomy" id="1916"/>
    <lineage>
        <taxon>Bacteria</taxon>
        <taxon>Bacillati</taxon>
        <taxon>Actinomycetota</taxon>
        <taxon>Actinomycetes</taxon>
        <taxon>Kitasatosporales</taxon>
        <taxon>Streptomycetaceae</taxon>
        <taxon>Streptomyces</taxon>
    </lineage>
</organism>
<sequence length="291" mass="30673">MEKKRSMTAAPAVAMTAVSMVLTVVVIVMWLGEAMPWAVALVVGLGLDGGWLATLAYERRLAARGDHSRAITGVGWGFGAVATGVLVAHALGEESAGAWLAVAWLPLAAKALWLVHGLWERTALTPTALDQIRDIQQDARDRAAVARAQLRAEAGTEVTRLEAVTGAGARVARVQAETAGELASAWSTLEEAREGEGTARALTCVTSRVTPTSPPSWRLPVWGPTEPVPAAIEGSADVVPLSNEEIDGIMSGLVDSGSYRVAAGRFRDMGYSAGEARLQASWRRVTREVAA</sequence>